<dbReference type="EC" id="2.7.13.3"/>
<dbReference type="EMBL" id="BA000017">
    <property type="protein sequence ID" value="BAB57653.1"/>
    <property type="status" value="ALT_INIT"/>
    <property type="molecule type" value="Genomic_DNA"/>
</dbReference>
<dbReference type="RefSeq" id="WP_000987774.1">
    <property type="nucleotide sequence ID" value="NC_002758.2"/>
</dbReference>
<dbReference type="SMR" id="Q99TZ9"/>
<dbReference type="KEGG" id="sav:SAV1491"/>
<dbReference type="HOGENOM" id="CLU_000445_89_2_9"/>
<dbReference type="Proteomes" id="UP000002481">
    <property type="component" value="Chromosome"/>
</dbReference>
<dbReference type="GO" id="GO:0005886">
    <property type="term" value="C:plasma membrane"/>
    <property type="evidence" value="ECO:0007669"/>
    <property type="project" value="UniProtKB-SubCell"/>
</dbReference>
<dbReference type="GO" id="GO:0005524">
    <property type="term" value="F:ATP binding"/>
    <property type="evidence" value="ECO:0007669"/>
    <property type="project" value="UniProtKB-KW"/>
</dbReference>
<dbReference type="GO" id="GO:0000156">
    <property type="term" value="F:phosphorelay response regulator activity"/>
    <property type="evidence" value="ECO:0007669"/>
    <property type="project" value="TreeGrafter"/>
</dbReference>
<dbReference type="GO" id="GO:0000155">
    <property type="term" value="F:phosphorelay sensor kinase activity"/>
    <property type="evidence" value="ECO:0007669"/>
    <property type="project" value="InterPro"/>
</dbReference>
<dbReference type="GO" id="GO:0030295">
    <property type="term" value="F:protein kinase activator activity"/>
    <property type="evidence" value="ECO:0007669"/>
    <property type="project" value="TreeGrafter"/>
</dbReference>
<dbReference type="GO" id="GO:0007234">
    <property type="term" value="P:osmosensory signaling via phosphorelay pathway"/>
    <property type="evidence" value="ECO:0007669"/>
    <property type="project" value="TreeGrafter"/>
</dbReference>
<dbReference type="CDD" id="cd06225">
    <property type="entry name" value="HAMP"/>
    <property type="match status" value="1"/>
</dbReference>
<dbReference type="CDD" id="cd00075">
    <property type="entry name" value="HATPase"/>
    <property type="match status" value="1"/>
</dbReference>
<dbReference type="CDD" id="cd00082">
    <property type="entry name" value="HisKA"/>
    <property type="match status" value="1"/>
</dbReference>
<dbReference type="FunFam" id="3.30.565.10:FF:000006">
    <property type="entry name" value="Sensor histidine kinase WalK"/>
    <property type="match status" value="1"/>
</dbReference>
<dbReference type="FunFam" id="1.10.287.130:FF:000001">
    <property type="entry name" value="Two-component sensor histidine kinase"/>
    <property type="match status" value="1"/>
</dbReference>
<dbReference type="Gene3D" id="1.10.287.130">
    <property type="match status" value="1"/>
</dbReference>
<dbReference type="Gene3D" id="6.10.340.10">
    <property type="match status" value="1"/>
</dbReference>
<dbReference type="Gene3D" id="3.30.565.10">
    <property type="entry name" value="Histidine kinase-like ATPase, C-terminal domain"/>
    <property type="match status" value="1"/>
</dbReference>
<dbReference type="InterPro" id="IPR003660">
    <property type="entry name" value="HAMP_dom"/>
</dbReference>
<dbReference type="InterPro" id="IPR036890">
    <property type="entry name" value="HATPase_C_sf"/>
</dbReference>
<dbReference type="InterPro" id="IPR005467">
    <property type="entry name" value="His_kinase_dom"/>
</dbReference>
<dbReference type="InterPro" id="IPR003661">
    <property type="entry name" value="HisK_dim/P_dom"/>
</dbReference>
<dbReference type="InterPro" id="IPR036097">
    <property type="entry name" value="HisK_dim/P_sf"/>
</dbReference>
<dbReference type="InterPro" id="IPR041328">
    <property type="entry name" value="HisK_sensor"/>
</dbReference>
<dbReference type="InterPro" id="IPR052545">
    <property type="entry name" value="Light-responsive_reg"/>
</dbReference>
<dbReference type="InterPro" id="IPR004358">
    <property type="entry name" value="Sig_transdc_His_kin-like_C"/>
</dbReference>
<dbReference type="PANTHER" id="PTHR42878:SF3">
    <property type="entry name" value="HISTIDINE PROTEIN KINASE SAES"/>
    <property type="match status" value="1"/>
</dbReference>
<dbReference type="PANTHER" id="PTHR42878">
    <property type="entry name" value="TWO-COMPONENT HISTIDINE KINASE"/>
    <property type="match status" value="1"/>
</dbReference>
<dbReference type="Pfam" id="PF00672">
    <property type="entry name" value="HAMP"/>
    <property type="match status" value="1"/>
</dbReference>
<dbReference type="Pfam" id="PF02518">
    <property type="entry name" value="HATPase_c"/>
    <property type="match status" value="1"/>
</dbReference>
<dbReference type="Pfam" id="PF18698">
    <property type="entry name" value="HisK_sensor"/>
    <property type="match status" value="1"/>
</dbReference>
<dbReference type="Pfam" id="PF00512">
    <property type="entry name" value="HisKA"/>
    <property type="match status" value="1"/>
</dbReference>
<dbReference type="PRINTS" id="PR00344">
    <property type="entry name" value="BCTRLSENSOR"/>
</dbReference>
<dbReference type="SMART" id="SM00304">
    <property type="entry name" value="HAMP"/>
    <property type="match status" value="1"/>
</dbReference>
<dbReference type="SMART" id="SM00387">
    <property type="entry name" value="HATPase_c"/>
    <property type="match status" value="1"/>
</dbReference>
<dbReference type="SMART" id="SM00388">
    <property type="entry name" value="HisKA"/>
    <property type="match status" value="1"/>
</dbReference>
<dbReference type="SUPFAM" id="SSF55874">
    <property type="entry name" value="ATPase domain of HSP90 chaperone/DNA topoisomerase II/histidine kinase"/>
    <property type="match status" value="1"/>
</dbReference>
<dbReference type="SUPFAM" id="SSF158472">
    <property type="entry name" value="HAMP domain-like"/>
    <property type="match status" value="1"/>
</dbReference>
<dbReference type="SUPFAM" id="SSF47384">
    <property type="entry name" value="Homodimeric domain of signal transducing histidine kinase"/>
    <property type="match status" value="1"/>
</dbReference>
<dbReference type="PROSITE" id="PS50885">
    <property type="entry name" value="HAMP"/>
    <property type="match status" value="1"/>
</dbReference>
<dbReference type="PROSITE" id="PS50109">
    <property type="entry name" value="HIS_KIN"/>
    <property type="match status" value="1"/>
</dbReference>
<accession>Q99TZ9</accession>
<organism>
    <name type="scientific">Staphylococcus aureus (strain Mu50 / ATCC 700699)</name>
    <dbReference type="NCBI Taxonomy" id="158878"/>
    <lineage>
        <taxon>Bacteria</taxon>
        <taxon>Bacillati</taxon>
        <taxon>Bacillota</taxon>
        <taxon>Bacilli</taxon>
        <taxon>Bacillales</taxon>
        <taxon>Staphylococcaceae</taxon>
        <taxon>Staphylococcus</taxon>
    </lineage>
</organism>
<reference key="1">
    <citation type="journal article" date="2001" name="Lancet">
        <title>Whole genome sequencing of meticillin-resistant Staphylococcus aureus.</title>
        <authorList>
            <person name="Kuroda M."/>
            <person name="Ohta T."/>
            <person name="Uchiyama I."/>
            <person name="Baba T."/>
            <person name="Yuzawa H."/>
            <person name="Kobayashi I."/>
            <person name="Cui L."/>
            <person name="Oguchi A."/>
            <person name="Aoki K."/>
            <person name="Nagai Y."/>
            <person name="Lian J.-Q."/>
            <person name="Ito T."/>
            <person name="Kanamori M."/>
            <person name="Matsumaru H."/>
            <person name="Maruyama A."/>
            <person name="Murakami H."/>
            <person name="Hosoyama A."/>
            <person name="Mizutani-Ui Y."/>
            <person name="Takahashi N.K."/>
            <person name="Sawano T."/>
            <person name="Inoue R."/>
            <person name="Kaito C."/>
            <person name="Sekimizu K."/>
            <person name="Hirakawa H."/>
            <person name="Kuhara S."/>
            <person name="Goto S."/>
            <person name="Yabuzaki J."/>
            <person name="Kanehisa M."/>
            <person name="Yamashita A."/>
            <person name="Oshima K."/>
            <person name="Furuya K."/>
            <person name="Yoshino C."/>
            <person name="Shiba T."/>
            <person name="Hattori M."/>
            <person name="Ogasawara N."/>
            <person name="Hayashi H."/>
            <person name="Hiramatsu K."/>
        </authorList>
    </citation>
    <scope>NUCLEOTIDE SEQUENCE [LARGE SCALE GENOMIC DNA]</scope>
    <source>
        <strain>Mu50 / ATCC 700699</strain>
    </source>
</reference>
<sequence length="583" mass="66062">MMSRLNSVVIKLWLTIILIVTTVLILLSIALITFMQYYFTQETENAIREDARRISSLVEQSHNKEEAIKYSQTLIENPGGLMIINNKHRQSTASLSNIKKQMLNEVVNNDHFDDVFDKGKSVTRNVTIKEKGSSQTYILLGYPTKAQKNSHSKYSGVFIYKDLKSIEDTNNAITIITIITAVIFLTITTVFAFFLSSRITKPLRRLRDQATRVSEGDYSYKPSVTTKDEIGQLSQAFNQMSTEIEEHVDALSTSKNIRDSLINSMVEGVLGINESRQIILSNKMANDIMDNIDEDAKAFLLRQIEDTFKSKQTEMRDLEMNARFFVVTTSYIDKIEQGGKSGVVVTVRDMTNEHNLDQMKKDFIANVSHELRTPISLLQGYTESIVDGIVTEPDEIKESLAVVLDESKRLNRLVNELLNVARMDAEGLSVNKEVQPIAALLDKMKIKYRQQADDLGLNMTFNYCKKRVWSYDMDRMDQVLTNLIDNASRYTKPGDEIAITCDENESEDILYIKDTGTGIAPEHLQQVFDRFYKVDAARTRGKQGTGLGLFICKMIIEEHGGSIDVKSELGKGTTFIIKLPKPE</sequence>
<feature type="chain" id="PRO_0000074883" description="Sensor protein SrrB">
    <location>
        <begin position="1"/>
        <end position="583"/>
    </location>
</feature>
<feature type="topological domain" description="Cytoplasmic" evidence="3">
    <location>
        <begin position="1"/>
        <end position="11"/>
    </location>
</feature>
<feature type="transmembrane region" description="Helical" evidence="3">
    <location>
        <begin position="12"/>
        <end position="32"/>
    </location>
</feature>
<feature type="topological domain" description="Extracellular" evidence="3">
    <location>
        <begin position="33"/>
        <end position="174"/>
    </location>
</feature>
<feature type="transmembrane region" description="Helical" evidence="3">
    <location>
        <begin position="175"/>
        <end position="195"/>
    </location>
</feature>
<feature type="topological domain" description="Cytoplasmic" evidence="3">
    <location>
        <begin position="196"/>
        <end position="583"/>
    </location>
</feature>
<feature type="domain" description="HAMP" evidence="4">
    <location>
        <begin position="197"/>
        <end position="249"/>
    </location>
</feature>
<feature type="domain" description="Histidine kinase" evidence="5">
    <location>
        <begin position="366"/>
        <end position="583"/>
    </location>
</feature>
<feature type="modified residue" description="Phosphohistidine; by autocatalysis" evidence="5">
    <location>
        <position position="369"/>
    </location>
</feature>
<gene>
    <name type="primary">srrB</name>
    <name type="ordered locus">SAV1491</name>
</gene>
<name>SRRB_STAAM</name>
<proteinExistence type="inferred from homology"/>
<comment type="function">
    <text evidence="2">Member of the two-component regulatory system SrrA/SrrB, which is involved in the global regulation of staphylococcal virulence factors in response to environmental oxygen levels as well as biofilm formation. Also plays an essential role in host-derived nitric oxide resistance by regulating hmp/flavohemoglobin, an enzyme that detoxifies nitric oxide by converting it to nitrate. Functions as a sensor protein kinase which is autophosphorylated at a histidine residue and transfers its phosphate group to SrrA. In turn, SrrA binds to the upstream promoter regions of the target genes to positively and negatively regulate their expression.</text>
</comment>
<comment type="catalytic activity">
    <reaction>
        <text>ATP + protein L-histidine = ADP + protein N-phospho-L-histidine.</text>
        <dbReference type="EC" id="2.7.13.3"/>
    </reaction>
</comment>
<comment type="subcellular location">
    <subcellularLocation>
        <location evidence="1">Cell membrane</location>
        <topology evidence="1">Multi-pass membrane protein</topology>
    </subcellularLocation>
</comment>
<comment type="sequence caution" evidence="6">
    <conflict type="erroneous initiation">
        <sequence resource="EMBL-CDS" id="BAB57653"/>
    </conflict>
</comment>
<keyword id="KW-0067">ATP-binding</keyword>
<keyword id="KW-1003">Cell membrane</keyword>
<keyword id="KW-0418">Kinase</keyword>
<keyword id="KW-0472">Membrane</keyword>
<keyword id="KW-0547">Nucleotide-binding</keyword>
<keyword id="KW-0597">Phosphoprotein</keyword>
<keyword id="KW-0808">Transferase</keyword>
<keyword id="KW-0812">Transmembrane</keyword>
<keyword id="KW-1133">Transmembrane helix</keyword>
<keyword id="KW-0902">Two-component regulatory system</keyword>
<evidence type="ECO:0000250" key="1"/>
<evidence type="ECO:0000250" key="2">
    <source>
        <dbReference type="UniProtKB" id="Q5HFT1"/>
    </source>
</evidence>
<evidence type="ECO:0000255" key="3"/>
<evidence type="ECO:0000255" key="4">
    <source>
        <dbReference type="PROSITE-ProRule" id="PRU00102"/>
    </source>
</evidence>
<evidence type="ECO:0000255" key="5">
    <source>
        <dbReference type="PROSITE-ProRule" id="PRU00107"/>
    </source>
</evidence>
<evidence type="ECO:0000305" key="6"/>
<protein>
    <recommendedName>
        <fullName>Sensor protein SrrB</fullName>
        <ecNumber>2.7.13.3</ecNumber>
    </recommendedName>
    <alternativeName>
        <fullName>Staphylococcal respiratory response protein B</fullName>
    </alternativeName>
</protein>